<feature type="signal peptide" evidence="1">
    <location>
        <begin position="1"/>
        <end position="22"/>
    </location>
</feature>
<feature type="chain" id="PRO_0000401235" description="CLAVATA3/ESR (CLE)-related protein 2">
    <location>
        <begin position="23"/>
        <end position="75"/>
    </location>
</feature>
<feature type="peptide" id="PRO_0000401236" description="CLE2p" evidence="5">
    <location>
        <begin position="64"/>
        <end position="75"/>
    </location>
</feature>
<feature type="region of interest" description="Disordered" evidence="2">
    <location>
        <begin position="40"/>
        <end position="75"/>
    </location>
</feature>
<feature type="modified residue" description="Hydroxyproline" evidence="5">
    <location>
        <position position="67"/>
    </location>
</feature>
<feature type="modified residue" description="Hydroxyproline" evidence="5">
    <location>
        <position position="70"/>
    </location>
</feature>
<feature type="glycosylation site" description="O-linked (Ara...) hydroxyproline" evidence="5">
    <location>
        <position position="70"/>
    </location>
</feature>
<proteinExistence type="evidence at protein level"/>
<sequence>MAKLSFTFCFLLFLLLSSIAAGSRPLEGARVGVKVRGLSPSIEATSPTVEDDQAAGSHGKSPERLSPGGPDPQHH</sequence>
<gene>
    <name evidence="6" type="primary">CLE2</name>
    <name evidence="8" type="ordered locus">At4g18510</name>
    <name evidence="9" type="ORF">F28J12.170</name>
</gene>
<name>CLE2_ARATH</name>
<keyword id="KW-0217">Developmental protein</keyword>
<keyword id="KW-0221">Differentiation</keyword>
<keyword id="KW-0325">Glycoprotein</keyword>
<keyword id="KW-0379">Hydroxylation</keyword>
<keyword id="KW-1185">Reference proteome</keyword>
<keyword id="KW-0964">Secreted</keyword>
<keyword id="KW-0732">Signal</keyword>
<accession>O49519</accession>
<evidence type="ECO:0000255" key="1"/>
<evidence type="ECO:0000256" key="2">
    <source>
        <dbReference type="SAM" id="MobiDB-lite"/>
    </source>
</evidence>
<evidence type="ECO:0000269" key="3">
    <source>
    </source>
</evidence>
<evidence type="ECO:0000269" key="4">
    <source>
    </source>
</evidence>
<evidence type="ECO:0000269" key="5">
    <source>
    </source>
</evidence>
<evidence type="ECO:0000303" key="6">
    <source>
    </source>
</evidence>
<evidence type="ECO:0000305" key="7"/>
<evidence type="ECO:0000312" key="8">
    <source>
        <dbReference type="Araport" id="AT4G18510"/>
    </source>
</evidence>
<evidence type="ECO:0000312" key="9">
    <source>
        <dbReference type="EMBL" id="CAA16731.1"/>
    </source>
</evidence>
<protein>
    <recommendedName>
        <fullName evidence="6">CLAVATA3/ESR (CLE)-related protein 2</fullName>
    </recommendedName>
    <component>
        <recommendedName>
            <fullName evidence="6">CLE2p</fullName>
        </recommendedName>
    </component>
</protein>
<reference key="1">
    <citation type="journal article" date="1999" name="Nature">
        <title>Sequence and analysis of chromosome 4 of the plant Arabidopsis thaliana.</title>
        <authorList>
            <person name="Mayer K.F.X."/>
            <person name="Schueller C."/>
            <person name="Wambutt R."/>
            <person name="Murphy G."/>
            <person name="Volckaert G."/>
            <person name="Pohl T."/>
            <person name="Duesterhoeft A."/>
            <person name="Stiekema W."/>
            <person name="Entian K.-D."/>
            <person name="Terryn N."/>
            <person name="Harris B."/>
            <person name="Ansorge W."/>
            <person name="Brandt P."/>
            <person name="Grivell L.A."/>
            <person name="Rieger M."/>
            <person name="Weichselgartner M."/>
            <person name="de Simone V."/>
            <person name="Obermaier B."/>
            <person name="Mache R."/>
            <person name="Mueller M."/>
            <person name="Kreis M."/>
            <person name="Delseny M."/>
            <person name="Puigdomenech P."/>
            <person name="Watson M."/>
            <person name="Schmidtheini T."/>
            <person name="Reichert B."/>
            <person name="Portetelle D."/>
            <person name="Perez-Alonso M."/>
            <person name="Boutry M."/>
            <person name="Bancroft I."/>
            <person name="Vos P."/>
            <person name="Hoheisel J."/>
            <person name="Zimmermann W."/>
            <person name="Wedler H."/>
            <person name="Ridley P."/>
            <person name="Langham S.-A."/>
            <person name="McCullagh B."/>
            <person name="Bilham L."/>
            <person name="Robben J."/>
            <person name="van der Schueren J."/>
            <person name="Grymonprez B."/>
            <person name="Chuang Y.-J."/>
            <person name="Vandenbussche F."/>
            <person name="Braeken M."/>
            <person name="Weltjens I."/>
            <person name="Voet M."/>
            <person name="Bastiaens I."/>
            <person name="Aert R."/>
            <person name="Defoor E."/>
            <person name="Weitzenegger T."/>
            <person name="Bothe G."/>
            <person name="Ramsperger U."/>
            <person name="Hilbert H."/>
            <person name="Braun M."/>
            <person name="Holzer E."/>
            <person name="Brandt A."/>
            <person name="Peters S."/>
            <person name="van Staveren M."/>
            <person name="Dirkse W."/>
            <person name="Mooijman P."/>
            <person name="Klein Lankhorst R."/>
            <person name="Rose M."/>
            <person name="Hauf J."/>
            <person name="Koetter P."/>
            <person name="Berneiser S."/>
            <person name="Hempel S."/>
            <person name="Feldpausch M."/>
            <person name="Lamberth S."/>
            <person name="Van den Daele H."/>
            <person name="De Keyser A."/>
            <person name="Buysshaert C."/>
            <person name="Gielen J."/>
            <person name="Villarroel R."/>
            <person name="De Clercq R."/>
            <person name="van Montagu M."/>
            <person name="Rogers J."/>
            <person name="Cronin A."/>
            <person name="Quail M.A."/>
            <person name="Bray-Allen S."/>
            <person name="Clark L."/>
            <person name="Doggett J."/>
            <person name="Hall S."/>
            <person name="Kay M."/>
            <person name="Lennard N."/>
            <person name="McLay K."/>
            <person name="Mayes R."/>
            <person name="Pettett A."/>
            <person name="Rajandream M.A."/>
            <person name="Lyne M."/>
            <person name="Benes V."/>
            <person name="Rechmann S."/>
            <person name="Borkova D."/>
            <person name="Bloecker H."/>
            <person name="Scharfe M."/>
            <person name="Grimm M."/>
            <person name="Loehnert T.-H."/>
            <person name="Dose S."/>
            <person name="de Haan M."/>
            <person name="Maarse A.C."/>
            <person name="Schaefer M."/>
            <person name="Mueller-Auer S."/>
            <person name="Gabel C."/>
            <person name="Fuchs M."/>
            <person name="Fartmann B."/>
            <person name="Granderath K."/>
            <person name="Dauner D."/>
            <person name="Herzl A."/>
            <person name="Neumann S."/>
            <person name="Argiriou A."/>
            <person name="Vitale D."/>
            <person name="Liguori R."/>
            <person name="Piravandi E."/>
            <person name="Massenet O."/>
            <person name="Quigley F."/>
            <person name="Clabauld G."/>
            <person name="Muendlein A."/>
            <person name="Felber R."/>
            <person name="Schnabl S."/>
            <person name="Hiller R."/>
            <person name="Schmidt W."/>
            <person name="Lecharny A."/>
            <person name="Aubourg S."/>
            <person name="Chefdor F."/>
            <person name="Cooke R."/>
            <person name="Berger C."/>
            <person name="Monfort A."/>
            <person name="Casacuberta E."/>
            <person name="Gibbons T."/>
            <person name="Weber N."/>
            <person name="Vandenbol M."/>
            <person name="Bargues M."/>
            <person name="Terol J."/>
            <person name="Torres A."/>
            <person name="Perez-Perez A."/>
            <person name="Purnelle B."/>
            <person name="Bent E."/>
            <person name="Johnson S."/>
            <person name="Tacon D."/>
            <person name="Jesse T."/>
            <person name="Heijnen L."/>
            <person name="Schwarz S."/>
            <person name="Scholler P."/>
            <person name="Heber S."/>
            <person name="Francs P."/>
            <person name="Bielke C."/>
            <person name="Frishman D."/>
            <person name="Haase D."/>
            <person name="Lemcke K."/>
            <person name="Mewes H.-W."/>
            <person name="Stocker S."/>
            <person name="Zaccaria P."/>
            <person name="Bevan M."/>
            <person name="Wilson R.K."/>
            <person name="de la Bastide M."/>
            <person name="Habermann K."/>
            <person name="Parnell L."/>
            <person name="Dedhia N."/>
            <person name="Gnoj L."/>
            <person name="Schutz K."/>
            <person name="Huang E."/>
            <person name="Spiegel L."/>
            <person name="Sekhon M."/>
            <person name="Murray J."/>
            <person name="Sheet P."/>
            <person name="Cordes M."/>
            <person name="Abu-Threideh J."/>
            <person name="Stoneking T."/>
            <person name="Kalicki J."/>
            <person name="Graves T."/>
            <person name="Harmon G."/>
            <person name="Edwards J."/>
            <person name="Latreille P."/>
            <person name="Courtney L."/>
            <person name="Cloud J."/>
            <person name="Abbott A."/>
            <person name="Scott K."/>
            <person name="Johnson D."/>
            <person name="Minx P."/>
            <person name="Bentley D."/>
            <person name="Fulton B."/>
            <person name="Miller N."/>
            <person name="Greco T."/>
            <person name="Kemp K."/>
            <person name="Kramer J."/>
            <person name="Fulton L."/>
            <person name="Mardis E."/>
            <person name="Dante M."/>
            <person name="Pepin K."/>
            <person name="Hillier L.W."/>
            <person name="Nelson J."/>
            <person name="Spieth J."/>
            <person name="Ryan E."/>
            <person name="Andrews S."/>
            <person name="Geisel C."/>
            <person name="Layman D."/>
            <person name="Du H."/>
            <person name="Ali J."/>
            <person name="Berghoff A."/>
            <person name="Jones K."/>
            <person name="Drone K."/>
            <person name="Cotton M."/>
            <person name="Joshu C."/>
            <person name="Antonoiu B."/>
            <person name="Zidanic M."/>
            <person name="Strong C."/>
            <person name="Sun H."/>
            <person name="Lamar B."/>
            <person name="Yordan C."/>
            <person name="Ma P."/>
            <person name="Zhong J."/>
            <person name="Preston R."/>
            <person name="Vil D."/>
            <person name="Shekher M."/>
            <person name="Matero A."/>
            <person name="Shah R."/>
            <person name="Swaby I.K."/>
            <person name="O'Shaughnessy A."/>
            <person name="Rodriguez M."/>
            <person name="Hoffman J."/>
            <person name="Till S."/>
            <person name="Granat S."/>
            <person name="Shohdy N."/>
            <person name="Hasegawa A."/>
            <person name="Hameed A."/>
            <person name="Lodhi M."/>
            <person name="Johnson A."/>
            <person name="Chen E."/>
            <person name="Marra M.A."/>
            <person name="Martienssen R."/>
            <person name="McCombie W.R."/>
        </authorList>
    </citation>
    <scope>NUCLEOTIDE SEQUENCE [LARGE SCALE GENOMIC DNA]</scope>
    <source>
        <strain>cv. Columbia</strain>
    </source>
</reference>
<reference key="2">
    <citation type="journal article" date="2017" name="Plant J.">
        <title>Araport11: a complete reannotation of the Arabidopsis thaliana reference genome.</title>
        <authorList>
            <person name="Cheng C.Y."/>
            <person name="Krishnakumar V."/>
            <person name="Chan A.P."/>
            <person name="Thibaud-Nissen F."/>
            <person name="Schobel S."/>
            <person name="Town C.D."/>
        </authorList>
    </citation>
    <scope>GENOME REANNOTATION</scope>
    <source>
        <strain>cv. Columbia</strain>
    </source>
</reference>
<reference key="3">
    <citation type="submission" date="2004-01" db="EMBL/GenBank/DDBJ databases">
        <title>Arabidopsis ORF clones.</title>
        <authorList>
            <person name="Cheuk R.F."/>
            <person name="Chen H."/>
            <person name="Kim C.J."/>
            <person name="Shinn P."/>
            <person name="Ecker J.R."/>
        </authorList>
    </citation>
    <scope>NUCLEOTIDE SEQUENCE [LARGE SCALE MRNA]</scope>
    <source>
        <strain>cv. Columbia</strain>
    </source>
</reference>
<reference key="4">
    <citation type="journal article" date="2001" name="Plant Physiol.">
        <title>A large family of genes that share homology with CLAVATA3.</title>
        <authorList>
            <person name="Cock J.M."/>
            <person name="McCormick S."/>
        </authorList>
    </citation>
    <scope>GENE FAMILY</scope>
    <scope>NOMENCLATURE</scope>
</reference>
<reference key="5">
    <citation type="journal article" date="2003" name="Plant Mol. Biol.">
        <title>The Arabidopsis CLV3-like (CLE) genes are expressed in diverse tissues and encode secreted proteins.</title>
        <authorList>
            <person name="Sharma V.K."/>
            <person name="Ramirez J."/>
            <person name="Fletcher J.C."/>
        </authorList>
    </citation>
    <scope>TISSUE SPECIFICITY</scope>
</reference>
<reference key="6">
    <citation type="journal article" date="2006" name="Plant Physiol.">
        <title>Gain-of-function phenotypes of many CLAVATA3/ESR genes, including four new family members, correlate with tandem variations in the conserved CLAVATA3/ESR domain.</title>
        <authorList>
            <person name="Strabala T.J."/>
            <person name="O'donnell P.J."/>
            <person name="Smit A.-M."/>
            <person name="Ampomah-Dwamena C."/>
            <person name="Martin E.J."/>
            <person name="Netzler N."/>
            <person name="Nieuwenhuizen N.J."/>
            <person name="Quinn B.D."/>
            <person name="Foote H.C.C."/>
            <person name="Hudson K.R."/>
        </authorList>
    </citation>
    <scope>FUNCTION</scope>
    <scope>GENE FAMILY</scope>
</reference>
<reference key="7">
    <citation type="journal article" date="2008" name="Cell. Mol. Life Sci.">
        <title>The CLE family of plant polypeptide signaling molecules.</title>
        <authorList>
            <person name="Jun J.H."/>
            <person name="Fiume E."/>
            <person name="Fletcher J.C."/>
        </authorList>
    </citation>
    <scope>REVIEW</scope>
</reference>
<reference key="8">
    <citation type="journal article" date="2008" name="Curr. Opin. Plant Biol.">
        <title>Diverse and conserved roles of CLE peptides.</title>
        <authorList>
            <person name="Mitchum M.G."/>
            <person name="Wang X."/>
            <person name="Davis E.L."/>
        </authorList>
    </citation>
    <scope>REVIEW</scope>
</reference>
<reference key="9">
    <citation type="journal article" date="2009" name="Nat. Chem. Biol.">
        <title>A glycopeptide regulating stem cell fate in Arabidopsis thaliana.</title>
        <authorList>
            <person name="Ohyama K."/>
            <person name="Shinohara H."/>
            <person name="Ogawa-Ohnishi M."/>
            <person name="Matsubayashi Y."/>
        </authorList>
    </citation>
    <scope>FUNCTION</scope>
    <scope>IDENTIFICATION BY MASS SPECTROMETRY OF CLE2P</scope>
    <scope>INTERACTION WITH CLV1</scope>
    <scope>GLYCOSYLATION AT PRO-70</scope>
    <scope>HYDROXYLATION AT PRO-67 AND PRO-70</scope>
    <scope>SUBCELLULAR LOCATION</scope>
</reference>
<reference key="10">
    <citation type="journal article" date="2010" name="Protoplasma">
        <title>CLE peptide signaling during plant development.</title>
        <authorList>
            <person name="Wang G."/>
            <person name="Fiers M."/>
        </authorList>
    </citation>
    <scope>REVIEW</scope>
</reference>
<comment type="function">
    <molecule>CLE2p</molecule>
    <text evidence="4 5">Extracellular signal peptide that regulates cell fate. May act with CLV1 as a ligand-receptor pair in a signal transduction pathway, coordinating growth between adjacent meristematic regions.</text>
</comment>
<comment type="subunit">
    <molecule>CLE2p</molecule>
    <text evidence="5">Interacts with the extracellular leucine-rich repeat region of CLV1.</text>
</comment>
<comment type="subcellular location">
    <molecule>CLE2p</molecule>
    <subcellularLocation>
        <location evidence="5">Secreted</location>
        <location evidence="5">Extracellular space</location>
    </subcellularLocation>
</comment>
<comment type="tissue specificity">
    <molecule>CLE2p</molecule>
    <text evidence="3">Mostly expressed in roots and seedlings, and, to a lower extent, in apex.</text>
</comment>
<comment type="PTM">
    <molecule>CLE2p</molecule>
    <text evidence="5">The O-glycosylation (arabinosylation) of the hydroxyproline Pro-70 enhances binding affinity of the CLE2p peptide for its receptor.</text>
</comment>
<comment type="similarity">
    <text evidence="7">Belongs to the CLV3/ESR signal peptide family.</text>
</comment>
<organism>
    <name type="scientific">Arabidopsis thaliana</name>
    <name type="common">Mouse-ear cress</name>
    <dbReference type="NCBI Taxonomy" id="3702"/>
    <lineage>
        <taxon>Eukaryota</taxon>
        <taxon>Viridiplantae</taxon>
        <taxon>Streptophyta</taxon>
        <taxon>Embryophyta</taxon>
        <taxon>Tracheophyta</taxon>
        <taxon>Spermatophyta</taxon>
        <taxon>Magnoliopsida</taxon>
        <taxon>eudicotyledons</taxon>
        <taxon>Gunneridae</taxon>
        <taxon>Pentapetalae</taxon>
        <taxon>rosids</taxon>
        <taxon>malvids</taxon>
        <taxon>Brassicales</taxon>
        <taxon>Brassicaceae</taxon>
        <taxon>Camelineae</taxon>
        <taxon>Arabidopsis</taxon>
    </lineage>
</organism>
<dbReference type="EMBL" id="AL021710">
    <property type="protein sequence ID" value="CAA16731.1"/>
    <property type="molecule type" value="Genomic_DNA"/>
</dbReference>
<dbReference type="EMBL" id="AL161548">
    <property type="protein sequence ID" value="CAB78853.1"/>
    <property type="molecule type" value="Genomic_DNA"/>
</dbReference>
<dbReference type="EMBL" id="CP002687">
    <property type="protein sequence ID" value="AEE84056.1"/>
    <property type="molecule type" value="Genomic_DNA"/>
</dbReference>
<dbReference type="EMBL" id="BT010812">
    <property type="protein sequence ID" value="AAR24179.1"/>
    <property type="molecule type" value="mRNA"/>
</dbReference>
<dbReference type="EMBL" id="BT011289">
    <property type="protein sequence ID" value="AAR92325.1"/>
    <property type="molecule type" value="mRNA"/>
</dbReference>
<dbReference type="PIR" id="T04547">
    <property type="entry name" value="T04547"/>
</dbReference>
<dbReference type="RefSeq" id="NP_193586.1">
    <property type="nucleotide sequence ID" value="NM_117965.5"/>
</dbReference>
<dbReference type="BioGRID" id="12876">
    <property type="interactions" value="2"/>
</dbReference>
<dbReference type="IntAct" id="O49519">
    <property type="interactions" value="1"/>
</dbReference>
<dbReference type="STRING" id="3702.O49519"/>
<dbReference type="GlyCosmos" id="O49519">
    <property type="glycosylation" value="1 site, No reported glycans"/>
</dbReference>
<dbReference type="PaxDb" id="3702-AT4G18510.1"/>
<dbReference type="EnsemblPlants" id="AT4G18510.1">
    <property type="protein sequence ID" value="AT4G18510.1"/>
    <property type="gene ID" value="AT4G18510"/>
</dbReference>
<dbReference type="GeneID" id="827583"/>
<dbReference type="Gramene" id="AT4G18510.1">
    <property type="protein sequence ID" value="AT4G18510.1"/>
    <property type="gene ID" value="AT4G18510"/>
</dbReference>
<dbReference type="KEGG" id="ath:AT4G18510"/>
<dbReference type="Araport" id="AT4G18510"/>
<dbReference type="TAIR" id="AT4G18510">
    <property type="gene designation" value="CLE2"/>
</dbReference>
<dbReference type="HOGENOM" id="CLU_2674476_0_0_1"/>
<dbReference type="InParanoid" id="O49519"/>
<dbReference type="OrthoDB" id="1099614at2759"/>
<dbReference type="PRO" id="PR:O49519"/>
<dbReference type="Proteomes" id="UP000006548">
    <property type="component" value="Chromosome 4"/>
</dbReference>
<dbReference type="ExpressionAtlas" id="O49519">
    <property type="expression patterns" value="baseline and differential"/>
</dbReference>
<dbReference type="GO" id="GO:0048046">
    <property type="term" value="C:apoplast"/>
    <property type="evidence" value="ECO:0000314"/>
    <property type="project" value="UniProtKB"/>
</dbReference>
<dbReference type="GO" id="GO:0033612">
    <property type="term" value="F:receptor serine/threonine kinase binding"/>
    <property type="evidence" value="ECO:0000353"/>
    <property type="project" value="UniProtKB"/>
</dbReference>
<dbReference type="GO" id="GO:0045165">
    <property type="term" value="P:cell fate commitment"/>
    <property type="evidence" value="ECO:0000314"/>
    <property type="project" value="UniProtKB"/>
</dbReference>
<dbReference type="GO" id="GO:0007267">
    <property type="term" value="P:cell-cell signaling"/>
    <property type="evidence" value="ECO:0000314"/>
    <property type="project" value="UniProtKB"/>
</dbReference>
<dbReference type="InterPro" id="IPR039616">
    <property type="entry name" value="CLE1-4"/>
</dbReference>
<dbReference type="PANTHER" id="PTHR33869">
    <property type="entry name" value="CLAVATA3/ESR (CLE)-RELATED PROTEIN 3"/>
    <property type="match status" value="1"/>
</dbReference>
<dbReference type="PANTHER" id="PTHR33869:SF30">
    <property type="entry name" value="CLAVATA3_ESR (CLE)-RELATED PROTEIN 2"/>
    <property type="match status" value="1"/>
</dbReference>